<accession>A1R4S6</accession>
<gene>
    <name evidence="1" type="primary">hutI</name>
    <name type="ordered locus">AAur_1464</name>
</gene>
<evidence type="ECO:0000255" key="1">
    <source>
        <dbReference type="HAMAP-Rule" id="MF_00372"/>
    </source>
</evidence>
<protein>
    <recommendedName>
        <fullName evidence="1">Imidazolonepropionase</fullName>
        <ecNumber evidence="1">3.5.2.7</ecNumber>
    </recommendedName>
    <alternativeName>
        <fullName evidence="1">Imidazolone-5-propionate hydrolase</fullName>
    </alternativeName>
</protein>
<dbReference type="EC" id="3.5.2.7" evidence="1"/>
<dbReference type="EMBL" id="CP000474">
    <property type="protein sequence ID" value="ABM06836.1"/>
    <property type="molecule type" value="Genomic_DNA"/>
</dbReference>
<dbReference type="RefSeq" id="WP_011774183.1">
    <property type="nucleotide sequence ID" value="NC_008711.1"/>
</dbReference>
<dbReference type="SMR" id="A1R4S6"/>
<dbReference type="STRING" id="290340.AAur_1464"/>
<dbReference type="KEGG" id="aau:AAur_1464"/>
<dbReference type="eggNOG" id="COG1228">
    <property type="taxonomic scope" value="Bacteria"/>
</dbReference>
<dbReference type="HOGENOM" id="CLU_041647_1_0_11"/>
<dbReference type="OrthoDB" id="9776455at2"/>
<dbReference type="UniPathway" id="UPA00379">
    <property type="reaction ID" value="UER00551"/>
</dbReference>
<dbReference type="Proteomes" id="UP000000637">
    <property type="component" value="Chromosome"/>
</dbReference>
<dbReference type="GO" id="GO:0005737">
    <property type="term" value="C:cytoplasm"/>
    <property type="evidence" value="ECO:0007669"/>
    <property type="project" value="UniProtKB-SubCell"/>
</dbReference>
<dbReference type="GO" id="GO:0050480">
    <property type="term" value="F:imidazolonepropionase activity"/>
    <property type="evidence" value="ECO:0007669"/>
    <property type="project" value="UniProtKB-UniRule"/>
</dbReference>
<dbReference type="GO" id="GO:0005506">
    <property type="term" value="F:iron ion binding"/>
    <property type="evidence" value="ECO:0007669"/>
    <property type="project" value="UniProtKB-UniRule"/>
</dbReference>
<dbReference type="GO" id="GO:0008270">
    <property type="term" value="F:zinc ion binding"/>
    <property type="evidence" value="ECO:0007669"/>
    <property type="project" value="UniProtKB-UniRule"/>
</dbReference>
<dbReference type="GO" id="GO:0019556">
    <property type="term" value="P:L-histidine catabolic process to glutamate and formamide"/>
    <property type="evidence" value="ECO:0007669"/>
    <property type="project" value="UniProtKB-UniPathway"/>
</dbReference>
<dbReference type="GO" id="GO:0019557">
    <property type="term" value="P:L-histidine catabolic process to glutamate and formate"/>
    <property type="evidence" value="ECO:0007669"/>
    <property type="project" value="UniProtKB-UniPathway"/>
</dbReference>
<dbReference type="Gene3D" id="3.20.20.140">
    <property type="entry name" value="Metal-dependent hydrolases"/>
    <property type="match status" value="1"/>
</dbReference>
<dbReference type="Gene3D" id="2.30.40.10">
    <property type="entry name" value="Urease, subunit C, domain 1"/>
    <property type="match status" value="1"/>
</dbReference>
<dbReference type="HAMAP" id="MF_00372">
    <property type="entry name" value="HutI"/>
    <property type="match status" value="1"/>
</dbReference>
<dbReference type="InterPro" id="IPR006680">
    <property type="entry name" value="Amidohydro-rel"/>
</dbReference>
<dbReference type="InterPro" id="IPR005920">
    <property type="entry name" value="HutI"/>
</dbReference>
<dbReference type="InterPro" id="IPR011059">
    <property type="entry name" value="Metal-dep_hydrolase_composite"/>
</dbReference>
<dbReference type="InterPro" id="IPR032466">
    <property type="entry name" value="Metal_Hydrolase"/>
</dbReference>
<dbReference type="NCBIfam" id="TIGR01224">
    <property type="entry name" value="hutI"/>
    <property type="match status" value="1"/>
</dbReference>
<dbReference type="PANTHER" id="PTHR42752">
    <property type="entry name" value="IMIDAZOLONEPROPIONASE"/>
    <property type="match status" value="1"/>
</dbReference>
<dbReference type="PANTHER" id="PTHR42752:SF1">
    <property type="entry name" value="IMIDAZOLONEPROPIONASE-RELATED"/>
    <property type="match status" value="1"/>
</dbReference>
<dbReference type="Pfam" id="PF01979">
    <property type="entry name" value="Amidohydro_1"/>
    <property type="match status" value="1"/>
</dbReference>
<dbReference type="SUPFAM" id="SSF51338">
    <property type="entry name" value="Composite domain of metallo-dependent hydrolases"/>
    <property type="match status" value="1"/>
</dbReference>
<dbReference type="SUPFAM" id="SSF51556">
    <property type="entry name" value="Metallo-dependent hydrolases"/>
    <property type="match status" value="1"/>
</dbReference>
<proteinExistence type="inferred from homology"/>
<keyword id="KW-0963">Cytoplasm</keyword>
<keyword id="KW-0369">Histidine metabolism</keyword>
<keyword id="KW-0378">Hydrolase</keyword>
<keyword id="KW-0408">Iron</keyword>
<keyword id="KW-0479">Metal-binding</keyword>
<keyword id="KW-0862">Zinc</keyword>
<reference key="1">
    <citation type="journal article" date="2006" name="PLoS Genet.">
        <title>Secrets of soil survival revealed by the genome sequence of Arthrobacter aurescens TC1.</title>
        <authorList>
            <person name="Mongodin E.F."/>
            <person name="Shapir N."/>
            <person name="Daugherty S.C."/>
            <person name="DeBoy R.T."/>
            <person name="Emerson J.B."/>
            <person name="Shvartzbeyn A."/>
            <person name="Radune D."/>
            <person name="Vamathevan J."/>
            <person name="Riggs F."/>
            <person name="Grinberg V."/>
            <person name="Khouri H.M."/>
            <person name="Wackett L.P."/>
            <person name="Nelson K.E."/>
            <person name="Sadowsky M.J."/>
        </authorList>
    </citation>
    <scope>NUCLEOTIDE SEQUENCE [LARGE SCALE GENOMIC DNA]</scope>
    <source>
        <strain>TC1</strain>
    </source>
</reference>
<feature type="chain" id="PRO_0000306425" description="Imidazolonepropionase">
    <location>
        <begin position="1"/>
        <end position="409"/>
    </location>
</feature>
<feature type="binding site" evidence="1">
    <location>
        <position position="70"/>
    </location>
    <ligand>
        <name>Fe(3+)</name>
        <dbReference type="ChEBI" id="CHEBI:29034"/>
    </ligand>
</feature>
<feature type="binding site" evidence="1">
    <location>
        <position position="70"/>
    </location>
    <ligand>
        <name>Zn(2+)</name>
        <dbReference type="ChEBI" id="CHEBI:29105"/>
    </ligand>
</feature>
<feature type="binding site" evidence="1">
    <location>
        <position position="72"/>
    </location>
    <ligand>
        <name>Fe(3+)</name>
        <dbReference type="ChEBI" id="CHEBI:29034"/>
    </ligand>
</feature>
<feature type="binding site" evidence="1">
    <location>
        <position position="72"/>
    </location>
    <ligand>
        <name>Zn(2+)</name>
        <dbReference type="ChEBI" id="CHEBI:29105"/>
    </ligand>
</feature>
<feature type="binding site" evidence="1">
    <location>
        <position position="79"/>
    </location>
    <ligand>
        <name>4-imidazolone-5-propanoate</name>
        <dbReference type="ChEBI" id="CHEBI:77893"/>
    </ligand>
</feature>
<feature type="binding site" evidence="1">
    <location>
        <position position="137"/>
    </location>
    <ligand>
        <name>4-imidazolone-5-propanoate</name>
        <dbReference type="ChEBI" id="CHEBI:77893"/>
    </ligand>
</feature>
<feature type="binding site" evidence="1">
    <location>
        <position position="137"/>
    </location>
    <ligand>
        <name>N-formimidoyl-L-glutamate</name>
        <dbReference type="ChEBI" id="CHEBI:58928"/>
    </ligand>
</feature>
<feature type="binding site" evidence="1">
    <location>
        <position position="164"/>
    </location>
    <ligand>
        <name>4-imidazolone-5-propanoate</name>
        <dbReference type="ChEBI" id="CHEBI:77893"/>
    </ligand>
</feature>
<feature type="binding site" evidence="1">
    <location>
        <position position="225"/>
    </location>
    <ligand>
        <name>Fe(3+)</name>
        <dbReference type="ChEBI" id="CHEBI:29034"/>
    </ligand>
</feature>
<feature type="binding site" evidence="1">
    <location>
        <position position="225"/>
    </location>
    <ligand>
        <name>Zn(2+)</name>
        <dbReference type="ChEBI" id="CHEBI:29105"/>
    </ligand>
</feature>
<feature type="binding site" evidence="1">
    <location>
        <position position="228"/>
    </location>
    <ligand>
        <name>4-imidazolone-5-propanoate</name>
        <dbReference type="ChEBI" id="CHEBI:77893"/>
    </ligand>
</feature>
<feature type="binding site" evidence="1">
    <location>
        <position position="314"/>
    </location>
    <ligand>
        <name>N-formimidoyl-L-glutamate</name>
        <dbReference type="ChEBI" id="CHEBI:58928"/>
    </ligand>
</feature>
<feature type="binding site" evidence="1">
    <location>
        <position position="316"/>
    </location>
    <ligand>
        <name>N-formimidoyl-L-glutamate</name>
        <dbReference type="ChEBI" id="CHEBI:58928"/>
    </ligand>
</feature>
<feature type="binding site" evidence="1">
    <location>
        <position position="317"/>
    </location>
    <ligand>
        <name>4-imidazolone-5-propanoate</name>
        <dbReference type="ChEBI" id="CHEBI:77893"/>
    </ligand>
</feature>
<organism>
    <name type="scientific">Paenarthrobacter aurescens (strain TC1)</name>
    <dbReference type="NCBI Taxonomy" id="290340"/>
    <lineage>
        <taxon>Bacteria</taxon>
        <taxon>Bacillati</taxon>
        <taxon>Actinomycetota</taxon>
        <taxon>Actinomycetes</taxon>
        <taxon>Micrococcales</taxon>
        <taxon>Micrococcaceae</taxon>
        <taxon>Paenarthrobacter</taxon>
    </lineage>
</organism>
<comment type="function">
    <text evidence="1">Catalyzes the hydrolytic cleavage of the carbon-nitrogen bond in imidazolone-5-propanoate to yield N-formimidoyl-L-glutamate. It is the third step in the universal histidine degradation pathway.</text>
</comment>
<comment type="catalytic activity">
    <reaction evidence="1">
        <text>4-imidazolone-5-propanoate + H2O = N-formimidoyl-L-glutamate</text>
        <dbReference type="Rhea" id="RHEA:23660"/>
        <dbReference type="ChEBI" id="CHEBI:15377"/>
        <dbReference type="ChEBI" id="CHEBI:58928"/>
        <dbReference type="ChEBI" id="CHEBI:77893"/>
        <dbReference type="EC" id="3.5.2.7"/>
    </reaction>
</comment>
<comment type="cofactor">
    <cofactor evidence="1">
        <name>Zn(2+)</name>
        <dbReference type="ChEBI" id="CHEBI:29105"/>
    </cofactor>
    <cofactor evidence="1">
        <name>Fe(3+)</name>
        <dbReference type="ChEBI" id="CHEBI:29034"/>
    </cofactor>
    <text evidence="1">Binds 1 zinc or iron ion per subunit.</text>
</comment>
<comment type="pathway">
    <text evidence="1">Amino-acid degradation; L-histidine degradation into L-glutamate; N-formimidoyl-L-glutamate from L-histidine: step 3/3.</text>
</comment>
<comment type="subcellular location">
    <subcellularLocation>
        <location evidence="1">Cytoplasm</location>
    </subcellularLocation>
</comment>
<comment type="similarity">
    <text evidence="1">Belongs to the metallo-dependent hydrolases superfamily. HutI family.</text>
</comment>
<name>HUTI_PAEAT</name>
<sequence length="409" mass="42887">MSATNSASTLITNIGELMTQDMEHRVLKDAAIVIEGERIAWLGSTKDAPAADENIDAQGRAVLPGWVDSHSHLVFAGDRTAEFEARMAGESYSAGGIAVTTGATRSVSDDELTRLVRDRVAEAVSQGTTYLESKTGYGLDVENEARSARIAAAEVDEVTYLGAHLVPDGSDPEEYTDLVCGPMLDAVLPHVRWADVFCERGAFTEDQSRRVLRAARDAGLGLRVHGNQLGEGPGVALAVEFAAASVDHVNYLSDKDVLALAGTWAGWDPATGAGTKGTVATCLPACDLSTRQPLAPGRELIDAGVQIALAANCNPGTSYTSSMAFCVTTAVLQMHLSVHEAVRAATYGGALALGRESGNDVDGERAVGSLAVGHRADLHMLKAPSATHLAYRPGIPLTGSVWRAGVRVV</sequence>